<proteinExistence type="inferred from homology"/>
<dbReference type="EC" id="2.1.1.33" evidence="2"/>
<dbReference type="EMBL" id="CP000010">
    <property type="protein sequence ID" value="AAU49915.1"/>
    <property type="molecule type" value="Genomic_DNA"/>
</dbReference>
<dbReference type="RefSeq" id="WP_004185899.1">
    <property type="nucleotide sequence ID" value="NC_006348.1"/>
</dbReference>
<dbReference type="RefSeq" id="YP_103733.1">
    <property type="nucleotide sequence ID" value="NC_006348.1"/>
</dbReference>
<dbReference type="SMR" id="Q62HT7"/>
<dbReference type="GeneID" id="92979869"/>
<dbReference type="KEGG" id="bma:BMA2167"/>
<dbReference type="PATRIC" id="fig|243160.12.peg.2234"/>
<dbReference type="eggNOG" id="COG0220">
    <property type="taxonomic scope" value="Bacteria"/>
</dbReference>
<dbReference type="HOGENOM" id="CLU_050910_0_1_4"/>
<dbReference type="UniPathway" id="UPA00989"/>
<dbReference type="Proteomes" id="UP000006693">
    <property type="component" value="Chromosome 1"/>
</dbReference>
<dbReference type="GO" id="GO:0043527">
    <property type="term" value="C:tRNA methyltransferase complex"/>
    <property type="evidence" value="ECO:0007669"/>
    <property type="project" value="TreeGrafter"/>
</dbReference>
<dbReference type="GO" id="GO:0008176">
    <property type="term" value="F:tRNA (guanine(46)-N7)-methyltransferase activity"/>
    <property type="evidence" value="ECO:0007669"/>
    <property type="project" value="UniProtKB-UniRule"/>
</dbReference>
<dbReference type="CDD" id="cd02440">
    <property type="entry name" value="AdoMet_MTases"/>
    <property type="match status" value="1"/>
</dbReference>
<dbReference type="FunFam" id="3.40.50.150:FF:000035">
    <property type="entry name" value="tRNA (guanine-N(7)-)-methyltransferase"/>
    <property type="match status" value="1"/>
</dbReference>
<dbReference type="Gene3D" id="3.40.50.150">
    <property type="entry name" value="Vaccinia Virus protein VP39"/>
    <property type="match status" value="1"/>
</dbReference>
<dbReference type="HAMAP" id="MF_01057">
    <property type="entry name" value="tRNA_methyltr_TrmB"/>
    <property type="match status" value="1"/>
</dbReference>
<dbReference type="InterPro" id="IPR029063">
    <property type="entry name" value="SAM-dependent_MTases_sf"/>
</dbReference>
<dbReference type="InterPro" id="IPR003358">
    <property type="entry name" value="tRNA_(Gua-N-7)_MeTrfase_Trmb"/>
</dbReference>
<dbReference type="InterPro" id="IPR055361">
    <property type="entry name" value="tRNA_methyltr_TrmB_bact"/>
</dbReference>
<dbReference type="NCBIfam" id="TIGR00091">
    <property type="entry name" value="tRNA (guanosine(46)-N7)-methyltransferase TrmB"/>
    <property type="match status" value="1"/>
</dbReference>
<dbReference type="PANTHER" id="PTHR23417">
    <property type="entry name" value="3-DEOXY-D-MANNO-OCTULOSONIC-ACID TRANSFERASE/TRNA GUANINE-N 7 - -METHYLTRANSFERASE"/>
    <property type="match status" value="1"/>
</dbReference>
<dbReference type="PANTHER" id="PTHR23417:SF14">
    <property type="entry name" value="PENTACOTRIPEPTIDE-REPEAT REGION OF PRORP DOMAIN-CONTAINING PROTEIN"/>
    <property type="match status" value="1"/>
</dbReference>
<dbReference type="Pfam" id="PF02390">
    <property type="entry name" value="Methyltransf_4"/>
    <property type="match status" value="1"/>
</dbReference>
<dbReference type="SUPFAM" id="SSF53335">
    <property type="entry name" value="S-adenosyl-L-methionine-dependent methyltransferases"/>
    <property type="match status" value="1"/>
</dbReference>
<dbReference type="PROSITE" id="PS51625">
    <property type="entry name" value="SAM_MT_TRMB"/>
    <property type="match status" value="1"/>
</dbReference>
<gene>
    <name evidence="2" type="primary">trmB</name>
    <name type="ordered locus">BMA2167</name>
</gene>
<feature type="chain" id="PRO_0000171310" description="tRNA (guanine-N(7)-)-methyltransferase">
    <location>
        <begin position="1"/>
        <end position="264"/>
    </location>
</feature>
<feature type="region of interest" description="Disordered" evidence="3">
    <location>
        <begin position="1"/>
        <end position="39"/>
    </location>
</feature>
<feature type="compositionally biased region" description="Low complexity" evidence="3">
    <location>
        <begin position="18"/>
        <end position="31"/>
    </location>
</feature>
<feature type="active site" evidence="1">
    <location>
        <position position="169"/>
    </location>
</feature>
<feature type="binding site" evidence="2">
    <location>
        <position position="94"/>
    </location>
    <ligand>
        <name>S-adenosyl-L-methionine</name>
        <dbReference type="ChEBI" id="CHEBI:59789"/>
    </ligand>
</feature>
<feature type="binding site" evidence="2">
    <location>
        <position position="119"/>
    </location>
    <ligand>
        <name>S-adenosyl-L-methionine</name>
        <dbReference type="ChEBI" id="CHEBI:59789"/>
    </ligand>
</feature>
<feature type="binding site" evidence="2">
    <location>
        <position position="146"/>
    </location>
    <ligand>
        <name>S-adenosyl-L-methionine</name>
        <dbReference type="ChEBI" id="CHEBI:59789"/>
    </ligand>
</feature>
<feature type="binding site" evidence="2">
    <location>
        <position position="169"/>
    </location>
    <ligand>
        <name>S-adenosyl-L-methionine</name>
        <dbReference type="ChEBI" id="CHEBI:59789"/>
    </ligand>
</feature>
<feature type="binding site" evidence="2">
    <location>
        <position position="173"/>
    </location>
    <ligand>
        <name>substrate</name>
    </ligand>
</feature>
<feature type="binding site" evidence="2">
    <location>
        <position position="205"/>
    </location>
    <ligand>
        <name>substrate</name>
    </ligand>
</feature>
<feature type="binding site" evidence="2">
    <location>
        <begin position="240"/>
        <end position="243"/>
    </location>
    <ligand>
        <name>substrate</name>
    </ligand>
</feature>
<keyword id="KW-0489">Methyltransferase</keyword>
<keyword id="KW-1185">Reference proteome</keyword>
<keyword id="KW-0949">S-adenosyl-L-methionine</keyword>
<keyword id="KW-0808">Transferase</keyword>
<keyword id="KW-0819">tRNA processing</keyword>
<organism>
    <name type="scientific">Burkholderia mallei (strain ATCC 23344)</name>
    <dbReference type="NCBI Taxonomy" id="243160"/>
    <lineage>
        <taxon>Bacteria</taxon>
        <taxon>Pseudomonadati</taxon>
        <taxon>Pseudomonadota</taxon>
        <taxon>Betaproteobacteria</taxon>
        <taxon>Burkholderiales</taxon>
        <taxon>Burkholderiaceae</taxon>
        <taxon>Burkholderia</taxon>
        <taxon>pseudomallei group</taxon>
    </lineage>
</organism>
<name>TRMB_BURMA</name>
<reference key="1">
    <citation type="journal article" date="2004" name="Proc. Natl. Acad. Sci. U.S.A.">
        <title>Structural flexibility in the Burkholderia mallei genome.</title>
        <authorList>
            <person name="Nierman W.C."/>
            <person name="DeShazer D."/>
            <person name="Kim H.S."/>
            <person name="Tettelin H."/>
            <person name="Nelson K.E."/>
            <person name="Feldblyum T.V."/>
            <person name="Ulrich R.L."/>
            <person name="Ronning C.M."/>
            <person name="Brinkac L.M."/>
            <person name="Daugherty S.C."/>
            <person name="Davidsen T.D."/>
            <person name="DeBoy R.T."/>
            <person name="Dimitrov G."/>
            <person name="Dodson R.J."/>
            <person name="Durkin A.S."/>
            <person name="Gwinn M.L."/>
            <person name="Haft D.H."/>
            <person name="Khouri H.M."/>
            <person name="Kolonay J.F."/>
            <person name="Madupu R."/>
            <person name="Mohammoud Y."/>
            <person name="Nelson W.C."/>
            <person name="Radune D."/>
            <person name="Romero C.M."/>
            <person name="Sarria S."/>
            <person name="Selengut J."/>
            <person name="Shamblin C."/>
            <person name="Sullivan S.A."/>
            <person name="White O."/>
            <person name="Yu Y."/>
            <person name="Zafar N."/>
            <person name="Zhou L."/>
            <person name="Fraser C.M."/>
        </authorList>
    </citation>
    <scope>NUCLEOTIDE SEQUENCE [LARGE SCALE GENOMIC DNA]</scope>
    <source>
        <strain>ATCC 23344</strain>
    </source>
</reference>
<protein>
    <recommendedName>
        <fullName evidence="2">tRNA (guanine-N(7)-)-methyltransferase</fullName>
        <ecNumber evidence="2">2.1.1.33</ecNumber>
    </recommendedName>
    <alternativeName>
        <fullName evidence="2">tRNA (guanine(46)-N(7))-methyltransferase</fullName>
    </alternativeName>
    <alternativeName>
        <fullName evidence="2">tRNA(m7G46)-methyltransferase</fullName>
    </alternativeName>
</protein>
<evidence type="ECO:0000250" key="1"/>
<evidence type="ECO:0000255" key="2">
    <source>
        <dbReference type="HAMAP-Rule" id="MF_01057"/>
    </source>
</evidence>
<evidence type="ECO:0000256" key="3">
    <source>
        <dbReference type="SAM" id="MobiDB-lite"/>
    </source>
</evidence>
<sequence>MIHDDDPNAPGAPHDDATAAPASATRAAPAAGDDDDANPLHLRRIRSFVTRAGRVSTGQRRAIDELGPRFVIPYGSAQPDWDAIFGRRAPRVLEIGFGMGASTAEIAALRPGDDFIGVEVHEPGVGALLKLIGEQQLSNIRIIQHDAVEVLAQMIAPDSLDGVHIFFPDPWHKARHHKRRLIQPPFVAQLAAHLKPGAYLHCATDWQNYAEQMLEVLSADPSLENTAQNYAPRPGYRPVTKFERRGLRLGHGVWDLVFRKKHAG</sequence>
<comment type="function">
    <text evidence="2">Catalyzes the formation of N(7)-methylguanine at position 46 (m7G46) in tRNA.</text>
</comment>
<comment type="catalytic activity">
    <reaction evidence="2">
        <text>guanosine(46) in tRNA + S-adenosyl-L-methionine = N(7)-methylguanosine(46) in tRNA + S-adenosyl-L-homocysteine</text>
        <dbReference type="Rhea" id="RHEA:42708"/>
        <dbReference type="Rhea" id="RHEA-COMP:10188"/>
        <dbReference type="Rhea" id="RHEA-COMP:10189"/>
        <dbReference type="ChEBI" id="CHEBI:57856"/>
        <dbReference type="ChEBI" id="CHEBI:59789"/>
        <dbReference type="ChEBI" id="CHEBI:74269"/>
        <dbReference type="ChEBI" id="CHEBI:74480"/>
        <dbReference type="EC" id="2.1.1.33"/>
    </reaction>
</comment>
<comment type="pathway">
    <text evidence="2">tRNA modification; N(7)-methylguanine-tRNA biosynthesis.</text>
</comment>
<comment type="similarity">
    <text evidence="2">Belongs to the class I-like SAM-binding methyltransferase superfamily. TrmB family.</text>
</comment>
<accession>Q62HT7</accession>